<dbReference type="EMBL" id="V01555">
    <property type="protein sequence ID" value="CAA24819.1"/>
    <property type="status" value="ALT_INIT"/>
    <property type="molecule type" value="Genomic_DNA"/>
</dbReference>
<dbReference type="EMBL" id="AJ507799">
    <property type="protein sequence ID" value="CAD53430.1"/>
    <property type="molecule type" value="Genomic_DNA"/>
</dbReference>
<dbReference type="RefSeq" id="YP_401680.1">
    <property type="nucleotide sequence ID" value="NC_007605.1"/>
</dbReference>
<dbReference type="PDB" id="7VCL">
    <property type="method" value="X-ray"/>
    <property type="resolution" value="3.20 A"/>
    <property type="chains" value="B=48-113"/>
</dbReference>
<dbReference type="PDB" id="7VCQ">
    <property type="method" value="X-ray"/>
    <property type="resolution" value="3.00 A"/>
    <property type="chains" value="J=48-113"/>
</dbReference>
<dbReference type="PDB" id="7WLP">
    <property type="method" value="X-ray"/>
    <property type="resolution" value="2.29 A"/>
    <property type="chains" value="B/C/D=16-102"/>
</dbReference>
<dbReference type="PDBsum" id="7VCL"/>
<dbReference type="PDBsum" id="7VCQ"/>
<dbReference type="PDBsum" id="7WLP"/>
<dbReference type="SMR" id="P30117"/>
<dbReference type="BioGRID" id="971754">
    <property type="interactions" value="18"/>
</dbReference>
<dbReference type="IntAct" id="P30117">
    <property type="interactions" value="1"/>
</dbReference>
<dbReference type="MINT" id="P30117"/>
<dbReference type="DNASU" id="3783712"/>
<dbReference type="GeneID" id="3783712"/>
<dbReference type="KEGG" id="vg:3783712"/>
<dbReference type="Proteomes" id="UP000153037">
    <property type="component" value="Segment"/>
</dbReference>
<dbReference type="GO" id="GO:0042025">
    <property type="term" value="C:host cell nucleus"/>
    <property type="evidence" value="ECO:0007669"/>
    <property type="project" value="UniProtKB-SubCell"/>
</dbReference>
<dbReference type="GO" id="GO:0044220">
    <property type="term" value="C:host cell perinuclear region of cytoplasm"/>
    <property type="evidence" value="ECO:0007669"/>
    <property type="project" value="UniProtKB-SubCell"/>
</dbReference>
<dbReference type="GO" id="GO:0019033">
    <property type="term" value="C:viral tegument"/>
    <property type="evidence" value="ECO:0007669"/>
    <property type="project" value="UniProtKB-SubCell"/>
</dbReference>
<reference key="1">
    <citation type="journal article" date="1984" name="Nature">
        <title>DNA sequence and expression of the B95-8 Epstein-Barr virus genome.</title>
        <authorList>
            <person name="Baer R."/>
            <person name="Bankier A.T."/>
            <person name="Biggin M.D."/>
            <person name="Deininger P.L."/>
            <person name="Farrell P.J."/>
            <person name="Gibson T.J."/>
            <person name="Hatfull G."/>
            <person name="Hudson G.S."/>
            <person name="Satchwell S.C."/>
            <person name="Seguin C."/>
            <person name="Tuffnell P.S."/>
            <person name="Barrell B.G."/>
        </authorList>
    </citation>
    <scope>NUCLEOTIDE SEQUENCE [LARGE SCALE GENOMIC DNA]</scope>
</reference>
<reference key="2">
    <citation type="journal article" date="2003" name="Virology">
        <title>Updated Epstein-Barr virus (EBV) DNA sequence and analysis of a promoter for the BART (CST, BARF0) RNAs of EBV.</title>
        <authorList>
            <person name="de Jesus O."/>
            <person name="Smith P.R."/>
            <person name="Spender L.C."/>
            <person name="Elgueta Karstegl C."/>
            <person name="Niller H.H."/>
            <person name="Huang D."/>
            <person name="Farrell P.J."/>
        </authorList>
    </citation>
    <scope>GENOME REANNOTATION</scope>
</reference>
<reference key="3">
    <citation type="journal article" date="2004" name="Proc. Natl. Acad. Sci. U.S.A.">
        <title>Proteins of purified Epstein-Barr virus.</title>
        <authorList>
            <person name="Johannsen E."/>
            <person name="Luftig M."/>
            <person name="Chase M.R."/>
            <person name="Weicksel S."/>
            <person name="Cahir-McFarland E."/>
            <person name="Illanes D."/>
            <person name="Sarracino D."/>
            <person name="Kieff E."/>
        </authorList>
    </citation>
    <scope>SUBCELLULAR LOCATION</scope>
</reference>
<reference key="4">
    <citation type="journal article" date="2017" name="J. Virol.">
        <title>Epstein-Barr Virus BKRF4 Gene Product Is Required for Efficient Progeny Production.</title>
        <authorList>
            <person name="Masud H.M.A.A."/>
            <person name="Watanabe T."/>
            <person name="Yoshida M."/>
            <person name="Sato Y."/>
            <person name="Goshima F."/>
            <person name="Kimura H."/>
            <person name="Murata T."/>
        </authorList>
    </citation>
    <scope>INTERACTION WITH BGLF2</scope>
    <scope>SUBCELLULAR LOCATION</scope>
</reference>
<reference key="5">
    <citation type="journal article" date="2018" name="J. Virol.">
        <title>A Screen for Epstein-Barr Virus Proteins That Inhibit the DNA Damage Response Reveals a Novel Histone Binding Protein.</title>
        <authorList>
            <person name="Ho T.H."/>
            <person name="Sitz J."/>
            <person name="Shen Q."/>
            <person name="Leblanc-Lacroix A."/>
            <person name="Campos E.I."/>
            <person name="Borozan I."/>
            <person name="Marcon E."/>
            <person name="Greenblatt J."/>
            <person name="Fradet-Turcotte A."/>
            <person name="Jin D.Y."/>
            <person name="Frappier L."/>
        </authorList>
    </citation>
    <scope>FUNCTION</scope>
    <scope>DOMAIN</scope>
    <scope>INTERACTION WITH HOST HISTONES H2A/H2B</scope>
    <scope>INTERACTION WITH HOST HISTONES H3/H4</scope>
</reference>
<reference evidence="8" key="6">
    <citation type="journal article" date="2022" name="Proc. Natl. Acad. Sci. U.S.A.">
        <title>Epstein-Barr virus protein BKRF4 restricts nucleosome assembly to suppress host antiviral responses.</title>
        <authorList>
            <person name="Chen J."/>
            <person name="Lu Z."/>
            <person name="Gong W."/>
            <person name="Xiao X."/>
            <person name="Feng X."/>
            <person name="Li W."/>
            <person name="Shan S."/>
            <person name="Xu D."/>
            <person name="Zhou Z."/>
        </authorList>
    </citation>
    <scope>X-RAY CRYSTALLOGRAPHY (2.30 ANGSTROMS) IN COMPLEX WITH HOST HISTONES H2A/H2B</scope>
    <scope>DOMAIN</scope>
    <scope>INTERACTION WITH HOST HISTONE DIMER H2A-H2B</scope>
    <scope>FUNCTION</scope>
</reference>
<reference key="7">
    <citation type="journal article" date="2022" name="J. Mol. Biol.">
        <title>Epstein-Barr Virus Tegument Protein BKRF4 is a Histone Chaperone.</title>
        <authorList>
            <person name="Liu Y."/>
            <person name="Li Y."/>
            <person name="Bao H."/>
            <person name="Liu Y."/>
            <person name="Chen L."/>
            <person name="Huang H."/>
        </authorList>
    </citation>
    <scope>X-RAY CRYSTALLOGRAPHY (3.00 ANGSTROMS) OF 48-113 IN COMPLEX WITH HOST HISTONES H2A/H2B; HOST HISTONES H3.3/H4 AND HISTONE CHAPERONE ASF1B</scope>
    <scope>FUNCTION</scope>
    <scope>INTERACTION WITH HOST HISTONES H2A/H2B</scope>
    <scope>INTERACTION WITH HOST HISTONES H3/H4</scope>
</reference>
<name>BKRF4_EBVB9</name>
<organism>
    <name type="scientific">Epstein-Barr virus (strain B95-8)</name>
    <name type="common">HHV-4</name>
    <name type="synonym">Human herpesvirus 4</name>
    <dbReference type="NCBI Taxonomy" id="10377"/>
    <lineage>
        <taxon>Viruses</taxon>
        <taxon>Duplodnaviria</taxon>
        <taxon>Heunggongvirae</taxon>
        <taxon>Peploviricota</taxon>
        <taxon>Herviviricetes</taxon>
        <taxon>Herpesvirales</taxon>
        <taxon>Orthoherpesviridae</taxon>
        <taxon>Gammaherpesvirinae</taxon>
        <taxon>Lymphocryptovirus</taxon>
        <taxon>Lymphocryptovirus humangamma4</taxon>
        <taxon>Epstein-Barr virus (strain GD1)</taxon>
    </lineage>
</organism>
<accession>P30117</accession>
<accession>Q777D8</accession>
<gene>
    <name type="ORF">BKRF4</name>
</gene>
<feature type="chain" id="PRO_0000116263" description="Tegument protein BKRF4">
    <location>
        <begin position="1"/>
        <end position="217"/>
    </location>
</feature>
<feature type="region of interest" description="Disordered" evidence="1">
    <location>
        <begin position="1"/>
        <end position="217"/>
    </location>
</feature>
<feature type="region of interest" description="Interaction with host histone dimer H3/H4" evidence="5">
    <location>
        <begin position="63"/>
        <end position="64"/>
    </location>
</feature>
<feature type="region of interest" description="Interaction with host histone dimer H2A/H2B" evidence="6">
    <location>
        <begin position="64"/>
        <end position="68"/>
    </location>
</feature>
<feature type="region of interest" description="Interaction with host histone dimer H2A/H2B" evidence="5 6">
    <location>
        <begin position="81"/>
        <end position="86"/>
    </location>
</feature>
<feature type="region of interest" description="Interaction with host histone dimer H2A/H2B" evidence="6">
    <location>
        <begin position="90"/>
        <end position="94"/>
    </location>
</feature>
<feature type="compositionally biased region" description="Polar residues" evidence="1">
    <location>
        <begin position="32"/>
        <end position="42"/>
    </location>
</feature>
<feature type="compositionally biased region" description="Acidic residues" evidence="1">
    <location>
        <begin position="43"/>
        <end position="79"/>
    </location>
</feature>
<feature type="compositionally biased region" description="Acidic residues" evidence="1">
    <location>
        <begin position="89"/>
        <end position="102"/>
    </location>
</feature>
<feature type="compositionally biased region" description="Low complexity" evidence="1">
    <location>
        <begin position="106"/>
        <end position="132"/>
    </location>
</feature>
<feature type="compositionally biased region" description="Pro residues" evidence="1">
    <location>
        <begin position="136"/>
        <end position="145"/>
    </location>
</feature>
<feature type="compositionally biased region" description="Polar residues" evidence="1">
    <location>
        <begin position="208"/>
        <end position="217"/>
    </location>
</feature>
<feature type="strand" evidence="9">
    <location>
        <begin position="61"/>
        <end position="63"/>
    </location>
</feature>
<feature type="strand" evidence="9">
    <location>
        <begin position="93"/>
        <end position="98"/>
    </location>
</feature>
<protein>
    <recommendedName>
        <fullName>Tegument protein BKRF4</fullName>
    </recommendedName>
</protein>
<organismHost>
    <name type="scientific">Homo sapiens</name>
    <name type="common">Human</name>
    <dbReference type="NCBI Taxonomy" id="9606"/>
</organismHost>
<sequence>MAMFLKSRGVRSCRDRRLLSDEEEETSQSSSYTLGSQASQSIQEEDVSDTDESDYSDEDEEIDLEEEYPSDEDPSEGSDSDPSWHPSDSDESDYSESDEDEATPGSQASRSSRVSPSTQQSSGLTPTPSFSRPRTRAPPRPPAPAPVRGRASAPPRPPAPVQQSTKDKGPHRPTRPVLRGPAPRRPPPPSSPNTYNKHMMETTPPIKGNNNYNWPWL</sequence>
<comment type="function">
    <text evidence="4 5 6">Overcomes the host DNA damage response (DDR) triggered by double-stranded DNA breaks by binding to host histones H2A/H2B, H3/H4 and to cellular chromatin (PubMed:35870648, PubMed:36067323). Can associate with the partially unfolded nucleosomes, promoting the nucleosome disassembly (PubMed:36067323). Interferes with histone ubiquitination and recruitment of repair proteins (PubMed:29743367).</text>
</comment>
<comment type="subunit">
    <text evidence="3 4 5">Forms a complex with the host H3/H4 dimer and histone chaperone ASF1 (PubMed:29743367, PubMed:35870648). Also forms a complex with host H2A/H2B dimer (PubMed:29743367, PubMed:35870648). Interacts (via C-terminus) with BGLF2; this interaction is important for infectious virion production (PubMed:28904200).</text>
</comment>
<comment type="subcellular location">
    <subcellularLocation>
        <location evidence="2">Virion tegument</location>
    </subcellularLocation>
    <subcellularLocation>
        <location evidence="3">Host nucleus</location>
    </subcellularLocation>
    <subcellularLocation>
        <location evidence="3">Host cytoplasm</location>
        <location evidence="3">Host perinuclear region</location>
    </subcellularLocation>
</comment>
<comment type="domain">
    <text evidence="4 6">Binds directly to histones through its N-terminus.</text>
</comment>
<comment type="similarity">
    <text evidence="7">Belongs to the lymphocryptovirus BKRF4 family.</text>
</comment>
<comment type="sequence caution" evidence="7">
    <conflict type="erroneous initiation">
        <sequence resource="EMBL-CDS" id="CAA24819"/>
    </conflict>
</comment>
<proteinExistence type="evidence at protein level"/>
<evidence type="ECO:0000256" key="1">
    <source>
        <dbReference type="SAM" id="MobiDB-lite"/>
    </source>
</evidence>
<evidence type="ECO:0000269" key="2">
    <source>
    </source>
</evidence>
<evidence type="ECO:0000269" key="3">
    <source>
    </source>
</evidence>
<evidence type="ECO:0000269" key="4">
    <source>
    </source>
</evidence>
<evidence type="ECO:0000269" key="5">
    <source>
    </source>
</evidence>
<evidence type="ECO:0000269" key="6">
    <source>
    </source>
</evidence>
<evidence type="ECO:0000305" key="7"/>
<evidence type="ECO:0007744" key="8">
    <source>
        <dbReference type="PDB" id="7WLP"/>
    </source>
</evidence>
<evidence type="ECO:0007829" key="9">
    <source>
        <dbReference type="PDB" id="7VCQ"/>
    </source>
</evidence>
<keyword id="KW-0002">3D-structure</keyword>
<keyword id="KW-0143">Chaperone</keyword>
<keyword id="KW-1035">Host cytoplasm</keyword>
<keyword id="KW-1048">Host nucleus</keyword>
<keyword id="KW-1185">Reference proteome</keyword>
<keyword id="KW-0946">Virion</keyword>
<keyword id="KW-0920">Virion tegument</keyword>